<name>PUR5_THEGJ</name>
<protein>
    <recommendedName>
        <fullName evidence="1">Phosphoribosylformylglycinamidine cyclo-ligase</fullName>
        <ecNumber evidence="1">6.3.3.1</ecNumber>
    </recommendedName>
    <alternativeName>
        <fullName evidence="1">AIR synthase</fullName>
    </alternativeName>
    <alternativeName>
        <fullName evidence="1">AIRS</fullName>
    </alternativeName>
    <alternativeName>
        <fullName evidence="1">Phosphoribosyl-aminoimidazole synthetase</fullName>
    </alternativeName>
</protein>
<proteinExistence type="inferred from homology"/>
<gene>
    <name evidence="1" type="primary">purM</name>
    <name type="ordered locus">TGAM_0637</name>
</gene>
<feature type="chain" id="PRO_1000212831" description="Phosphoribosylformylglycinamidine cyclo-ligase">
    <location>
        <begin position="1"/>
        <end position="334"/>
    </location>
</feature>
<reference key="1">
    <citation type="journal article" date="2007" name="Genome Biol.">
        <title>Genome analysis and genome-wide proteomics of Thermococcus gammatolerans, the most radioresistant organism known amongst the Archaea.</title>
        <authorList>
            <person name="Zivanovic Y."/>
            <person name="Armengaud J."/>
            <person name="Lagorce A."/>
            <person name="Leplat C."/>
            <person name="Guerin P."/>
            <person name="Dutertre M."/>
            <person name="Anthouard V."/>
            <person name="Forterre P."/>
            <person name="Wincker P."/>
            <person name="Confalonieri F."/>
        </authorList>
    </citation>
    <scope>NUCLEOTIDE SEQUENCE [LARGE SCALE GENOMIC DNA]</scope>
    <source>
        <strain>DSM 15229 / JCM 11827 / EJ3</strain>
    </source>
</reference>
<accession>C5A4H7</accession>
<comment type="catalytic activity">
    <reaction evidence="1">
        <text>2-formamido-N(1)-(5-O-phospho-beta-D-ribosyl)acetamidine + ATP = 5-amino-1-(5-phospho-beta-D-ribosyl)imidazole + ADP + phosphate + H(+)</text>
        <dbReference type="Rhea" id="RHEA:23032"/>
        <dbReference type="ChEBI" id="CHEBI:15378"/>
        <dbReference type="ChEBI" id="CHEBI:30616"/>
        <dbReference type="ChEBI" id="CHEBI:43474"/>
        <dbReference type="ChEBI" id="CHEBI:137981"/>
        <dbReference type="ChEBI" id="CHEBI:147287"/>
        <dbReference type="ChEBI" id="CHEBI:456216"/>
        <dbReference type="EC" id="6.3.3.1"/>
    </reaction>
</comment>
<comment type="pathway">
    <text evidence="1">Purine metabolism; IMP biosynthesis via de novo pathway; 5-amino-1-(5-phospho-D-ribosyl)imidazole from N(2)-formyl-N(1)-(5-phospho-D-ribosyl)glycinamide: step 2/2.</text>
</comment>
<comment type="subcellular location">
    <subcellularLocation>
        <location evidence="1">Cytoplasm</location>
    </subcellularLocation>
</comment>
<comment type="similarity">
    <text evidence="1">Belongs to the AIR synthase family.</text>
</comment>
<keyword id="KW-0067">ATP-binding</keyword>
<keyword id="KW-0963">Cytoplasm</keyword>
<keyword id="KW-0436">Ligase</keyword>
<keyword id="KW-0547">Nucleotide-binding</keyword>
<keyword id="KW-0658">Purine biosynthesis</keyword>
<keyword id="KW-1185">Reference proteome</keyword>
<dbReference type="EC" id="6.3.3.1" evidence="1"/>
<dbReference type="EMBL" id="CP001398">
    <property type="protein sequence ID" value="ACS33139.1"/>
    <property type="molecule type" value="Genomic_DNA"/>
</dbReference>
<dbReference type="RefSeq" id="WP_015858257.1">
    <property type="nucleotide sequence ID" value="NC_012804.1"/>
</dbReference>
<dbReference type="SMR" id="C5A4H7"/>
<dbReference type="STRING" id="593117.TGAM_0637"/>
<dbReference type="PaxDb" id="593117-TGAM_0637"/>
<dbReference type="GeneID" id="7988851"/>
<dbReference type="KEGG" id="tga:TGAM_0637"/>
<dbReference type="PATRIC" id="fig|593117.10.peg.635"/>
<dbReference type="eggNOG" id="arCOG00639">
    <property type="taxonomic scope" value="Archaea"/>
</dbReference>
<dbReference type="HOGENOM" id="CLU_047116_0_0_2"/>
<dbReference type="OrthoDB" id="6605at2157"/>
<dbReference type="UniPathway" id="UPA00074">
    <property type="reaction ID" value="UER00129"/>
</dbReference>
<dbReference type="Proteomes" id="UP000001488">
    <property type="component" value="Chromosome"/>
</dbReference>
<dbReference type="GO" id="GO:0005829">
    <property type="term" value="C:cytosol"/>
    <property type="evidence" value="ECO:0007669"/>
    <property type="project" value="TreeGrafter"/>
</dbReference>
<dbReference type="GO" id="GO:0005524">
    <property type="term" value="F:ATP binding"/>
    <property type="evidence" value="ECO:0007669"/>
    <property type="project" value="UniProtKB-KW"/>
</dbReference>
<dbReference type="GO" id="GO:0004637">
    <property type="term" value="F:phosphoribosylamine-glycine ligase activity"/>
    <property type="evidence" value="ECO:0007669"/>
    <property type="project" value="TreeGrafter"/>
</dbReference>
<dbReference type="GO" id="GO:0004641">
    <property type="term" value="F:phosphoribosylformylglycinamidine cyclo-ligase activity"/>
    <property type="evidence" value="ECO:0007669"/>
    <property type="project" value="UniProtKB-UniRule"/>
</dbReference>
<dbReference type="GO" id="GO:0006189">
    <property type="term" value="P:'de novo' IMP biosynthetic process"/>
    <property type="evidence" value="ECO:0007669"/>
    <property type="project" value="UniProtKB-UniRule"/>
</dbReference>
<dbReference type="GO" id="GO:0046084">
    <property type="term" value="P:adenine biosynthetic process"/>
    <property type="evidence" value="ECO:0007669"/>
    <property type="project" value="TreeGrafter"/>
</dbReference>
<dbReference type="CDD" id="cd02196">
    <property type="entry name" value="PurM"/>
    <property type="match status" value="1"/>
</dbReference>
<dbReference type="FunFam" id="3.30.1330.10:FF:000020">
    <property type="entry name" value="Phosphoribosylformylglycinamidine cyclo-ligase"/>
    <property type="match status" value="1"/>
</dbReference>
<dbReference type="FunFam" id="3.90.650.10:FF:000011">
    <property type="entry name" value="Phosphoribosylformylglycinamidine cyclo-ligase"/>
    <property type="match status" value="1"/>
</dbReference>
<dbReference type="Gene3D" id="3.90.650.10">
    <property type="entry name" value="PurM-like C-terminal domain"/>
    <property type="match status" value="1"/>
</dbReference>
<dbReference type="Gene3D" id="3.30.1330.10">
    <property type="entry name" value="PurM-like, N-terminal domain"/>
    <property type="match status" value="1"/>
</dbReference>
<dbReference type="HAMAP" id="MF_00741">
    <property type="entry name" value="AIRS"/>
    <property type="match status" value="1"/>
</dbReference>
<dbReference type="InterPro" id="IPR010918">
    <property type="entry name" value="PurM-like_C_dom"/>
</dbReference>
<dbReference type="InterPro" id="IPR036676">
    <property type="entry name" value="PurM-like_C_sf"/>
</dbReference>
<dbReference type="InterPro" id="IPR016188">
    <property type="entry name" value="PurM-like_N"/>
</dbReference>
<dbReference type="InterPro" id="IPR036921">
    <property type="entry name" value="PurM-like_N_sf"/>
</dbReference>
<dbReference type="InterPro" id="IPR004733">
    <property type="entry name" value="PurM_cligase"/>
</dbReference>
<dbReference type="NCBIfam" id="TIGR00878">
    <property type="entry name" value="purM"/>
    <property type="match status" value="1"/>
</dbReference>
<dbReference type="PANTHER" id="PTHR10520:SF12">
    <property type="entry name" value="TRIFUNCTIONAL PURINE BIOSYNTHETIC PROTEIN ADENOSINE-3"/>
    <property type="match status" value="1"/>
</dbReference>
<dbReference type="PANTHER" id="PTHR10520">
    <property type="entry name" value="TRIFUNCTIONAL PURINE BIOSYNTHETIC PROTEIN ADENOSINE-3-RELATED"/>
    <property type="match status" value="1"/>
</dbReference>
<dbReference type="Pfam" id="PF00586">
    <property type="entry name" value="AIRS"/>
    <property type="match status" value="1"/>
</dbReference>
<dbReference type="Pfam" id="PF02769">
    <property type="entry name" value="AIRS_C"/>
    <property type="match status" value="1"/>
</dbReference>
<dbReference type="SUPFAM" id="SSF56042">
    <property type="entry name" value="PurM C-terminal domain-like"/>
    <property type="match status" value="1"/>
</dbReference>
<dbReference type="SUPFAM" id="SSF55326">
    <property type="entry name" value="PurM N-terminal domain-like"/>
    <property type="match status" value="1"/>
</dbReference>
<organism>
    <name type="scientific">Thermococcus gammatolerans (strain DSM 15229 / JCM 11827 / EJ3)</name>
    <dbReference type="NCBI Taxonomy" id="593117"/>
    <lineage>
        <taxon>Archaea</taxon>
        <taxon>Methanobacteriati</taxon>
        <taxon>Methanobacteriota</taxon>
        <taxon>Thermococci</taxon>
        <taxon>Thermococcales</taxon>
        <taxon>Thermococcaceae</taxon>
        <taxon>Thermococcus</taxon>
    </lineage>
</organism>
<evidence type="ECO:0000255" key="1">
    <source>
        <dbReference type="HAMAP-Rule" id="MF_00741"/>
    </source>
</evidence>
<sequence length="334" mass="36546">MLTYAQAGVDDEKTVRALKNIIGLARETFKFRRGKPGEPAENLGHYSALLDFGNFYLAMTTDGVGTKVLVAEAVGKFNTIGIDMIAMNVNDLLCVGAEPIALVDYLAVREPDEKIFAEIAKGLYAGAEKAGIAIVGGETAVMPDLINGFDLAGTAIGIVEKGKVITGEEMRPDDAVIGISSSGIHSNGLTLARKLLIPKYGLDYEYEGRKLWEWLLEPTRIYVRAVLELLERVEVHGLAHITGGGLINLKRLTNYGFSLEMPPIEGIFKLIHENGVPLEEMFRVFNMGVGFVAIVPPEEKEEALGILNKYYESFELGRVTKEPGIRVENYGIKL</sequence>